<organism>
    <name type="scientific">Escherichia coli (strain B / REL606)</name>
    <dbReference type="NCBI Taxonomy" id="413997"/>
    <lineage>
        <taxon>Bacteria</taxon>
        <taxon>Pseudomonadati</taxon>
        <taxon>Pseudomonadota</taxon>
        <taxon>Gammaproteobacteria</taxon>
        <taxon>Enterobacterales</taxon>
        <taxon>Enterobacteriaceae</taxon>
        <taxon>Escherichia</taxon>
    </lineage>
</organism>
<sequence>MNKVVLLCRPGFEKECAAEITDKAGQREIFGFARVKENAGYVIYECYQPDDGDKLIRELPFSSLIFARQWFVVGELLQHLPPEDRITPIVGMLQGVVEKGGELRVEVADTNESKELLKFCRKFTVPLRAALRDAGVLANYETPKRPVVHVFFIAPGCCYTGYSYSNNNSPFYMGIPRLKFPADAPSRSTLKLEEAFHVFIPADEWDERLANGMWAVDLGACPGGWTYQLVKRNMWVYSVDNGPMAQSLMDTGQVTWLREDGFKFRPTRSNISWMVCDMVEKPAKVAALMAQWLVNGWCRETIFNLKLPMKKRYEEVSHNLAYIQAQLDEHGINAQIQARQLYHDREEVTVHVRRIWAAVGGRRDER</sequence>
<protein>
    <recommendedName>
        <fullName evidence="1">Ribosomal RNA large subunit methyltransferase M</fullName>
        <ecNumber evidence="1">2.1.1.186</ecNumber>
    </recommendedName>
    <alternativeName>
        <fullName evidence="1">23S rRNA (cytidine2498-2'-O)-methyltransferase</fullName>
    </alternativeName>
    <alternativeName>
        <fullName evidence="1">23S rRNA 2'-O-ribose methyltransferase RlmM</fullName>
    </alternativeName>
</protein>
<keyword id="KW-0963">Cytoplasm</keyword>
<keyword id="KW-0489">Methyltransferase</keyword>
<keyword id="KW-0698">rRNA processing</keyword>
<keyword id="KW-0949">S-adenosyl-L-methionine</keyword>
<keyword id="KW-0808">Transferase</keyword>
<gene>
    <name evidence="1" type="primary">rlmM</name>
    <name type="ordered locus">ECB_02657</name>
</gene>
<feature type="chain" id="PRO_0000388983" description="Ribosomal RNA large subunit methyltransferase M">
    <location>
        <begin position="1"/>
        <end position="366"/>
    </location>
</feature>
<feature type="active site" description="Proton acceptor" evidence="1">
    <location>
        <position position="306"/>
    </location>
</feature>
<feature type="binding site" evidence="1">
    <location>
        <position position="188"/>
    </location>
    <ligand>
        <name>S-adenosyl-L-methionine</name>
        <dbReference type="ChEBI" id="CHEBI:59789"/>
    </ligand>
</feature>
<feature type="binding site" evidence="1">
    <location>
        <begin position="221"/>
        <end position="224"/>
    </location>
    <ligand>
        <name>S-adenosyl-L-methionine</name>
        <dbReference type="ChEBI" id="CHEBI:59789"/>
    </ligand>
</feature>
<feature type="binding site" evidence="1">
    <location>
        <position position="240"/>
    </location>
    <ligand>
        <name>S-adenosyl-L-methionine</name>
        <dbReference type="ChEBI" id="CHEBI:59789"/>
    </ligand>
</feature>
<feature type="binding site" evidence="1">
    <location>
        <position position="260"/>
    </location>
    <ligand>
        <name>S-adenosyl-L-methionine</name>
        <dbReference type="ChEBI" id="CHEBI:59789"/>
    </ligand>
</feature>
<feature type="binding site" evidence="1">
    <location>
        <position position="277"/>
    </location>
    <ligand>
        <name>S-adenosyl-L-methionine</name>
        <dbReference type="ChEBI" id="CHEBI:59789"/>
    </ligand>
</feature>
<name>RLMM_ECOBR</name>
<accession>C6UCT5</accession>
<reference key="1">
    <citation type="journal article" date="2009" name="J. Mol. Biol.">
        <title>Genome sequences of Escherichia coli B strains REL606 and BL21(DE3).</title>
        <authorList>
            <person name="Jeong H."/>
            <person name="Barbe V."/>
            <person name="Lee C.H."/>
            <person name="Vallenet D."/>
            <person name="Yu D.S."/>
            <person name="Choi S.H."/>
            <person name="Couloux A."/>
            <person name="Lee S.W."/>
            <person name="Yoon S.H."/>
            <person name="Cattolico L."/>
            <person name="Hur C.G."/>
            <person name="Park H.S."/>
            <person name="Segurens B."/>
            <person name="Kim S.C."/>
            <person name="Oh T.K."/>
            <person name="Lenski R.E."/>
            <person name="Studier F.W."/>
            <person name="Daegelen P."/>
            <person name="Kim J.F."/>
        </authorList>
    </citation>
    <scope>NUCLEOTIDE SEQUENCE [LARGE SCALE GENOMIC DNA]</scope>
    <source>
        <strain>B / REL606</strain>
    </source>
</reference>
<evidence type="ECO:0000255" key="1">
    <source>
        <dbReference type="HAMAP-Rule" id="MF_01551"/>
    </source>
</evidence>
<proteinExistence type="inferred from homology"/>
<comment type="function">
    <text evidence="1">Catalyzes the 2'-O-methylation at nucleotide C2498 in 23S rRNA.</text>
</comment>
<comment type="catalytic activity">
    <reaction evidence="1">
        <text>cytidine(2498) in 23S rRNA + S-adenosyl-L-methionine = 2'-O-methylcytidine(2498) in 23S rRNA + S-adenosyl-L-homocysteine + H(+)</text>
        <dbReference type="Rhea" id="RHEA:42788"/>
        <dbReference type="Rhea" id="RHEA-COMP:10244"/>
        <dbReference type="Rhea" id="RHEA-COMP:10245"/>
        <dbReference type="ChEBI" id="CHEBI:15378"/>
        <dbReference type="ChEBI" id="CHEBI:57856"/>
        <dbReference type="ChEBI" id="CHEBI:59789"/>
        <dbReference type="ChEBI" id="CHEBI:74495"/>
        <dbReference type="ChEBI" id="CHEBI:82748"/>
        <dbReference type="EC" id="2.1.1.186"/>
    </reaction>
</comment>
<comment type="subunit">
    <text evidence="1">Monomer.</text>
</comment>
<comment type="subcellular location">
    <subcellularLocation>
        <location evidence="1">Cytoplasm</location>
    </subcellularLocation>
</comment>
<comment type="similarity">
    <text evidence="1">Belongs to the class I-like SAM-binding methyltransferase superfamily. RNA methyltransferase RlmE family. RlmM subfamily.</text>
</comment>
<dbReference type="EC" id="2.1.1.186" evidence="1"/>
<dbReference type="EMBL" id="CP000819">
    <property type="protein sequence ID" value="ACT40309.1"/>
    <property type="molecule type" value="Genomic_DNA"/>
</dbReference>
<dbReference type="RefSeq" id="WP_001045520.1">
    <property type="nucleotide sequence ID" value="NC_012967.1"/>
</dbReference>
<dbReference type="SMR" id="C6UCT5"/>
<dbReference type="GeneID" id="75203803"/>
<dbReference type="KEGG" id="ebr:ECB_02657"/>
<dbReference type="HOGENOM" id="CLU_043780_0_0_6"/>
<dbReference type="BioCyc" id="ECOL413997:GCQD-2877-MONOMER"/>
<dbReference type="GO" id="GO:0005737">
    <property type="term" value="C:cytoplasm"/>
    <property type="evidence" value="ECO:0007669"/>
    <property type="project" value="UniProtKB-SubCell"/>
</dbReference>
<dbReference type="GO" id="GO:0008757">
    <property type="term" value="F:S-adenosylmethionine-dependent methyltransferase activity"/>
    <property type="evidence" value="ECO:0007669"/>
    <property type="project" value="UniProtKB-UniRule"/>
</dbReference>
<dbReference type="GO" id="GO:0032259">
    <property type="term" value="P:methylation"/>
    <property type="evidence" value="ECO:0007669"/>
    <property type="project" value="UniProtKB-KW"/>
</dbReference>
<dbReference type="GO" id="GO:0006364">
    <property type="term" value="P:rRNA processing"/>
    <property type="evidence" value="ECO:0007669"/>
    <property type="project" value="UniProtKB-UniRule"/>
</dbReference>
<dbReference type="FunFam" id="3.30.2300.20:FF:000001">
    <property type="entry name" value="Ribosomal RNA large subunit methyltransferase M"/>
    <property type="match status" value="1"/>
</dbReference>
<dbReference type="FunFam" id="3.30.70.2810:FF:000001">
    <property type="entry name" value="Ribosomal RNA large subunit methyltransferase M"/>
    <property type="match status" value="1"/>
</dbReference>
<dbReference type="FunFam" id="3.40.50.150:FF:000020">
    <property type="entry name" value="Ribosomal RNA large subunit methyltransferase M"/>
    <property type="match status" value="1"/>
</dbReference>
<dbReference type="Gene3D" id="3.30.2300.20">
    <property type="match status" value="1"/>
</dbReference>
<dbReference type="Gene3D" id="3.30.70.2810">
    <property type="match status" value="1"/>
</dbReference>
<dbReference type="Gene3D" id="3.40.50.150">
    <property type="entry name" value="Vaccinia Virus protein VP39"/>
    <property type="match status" value="1"/>
</dbReference>
<dbReference type="HAMAP" id="MF_01551">
    <property type="entry name" value="23SrRNA_methyltr_M"/>
    <property type="match status" value="1"/>
</dbReference>
<dbReference type="InterPro" id="IPR040739">
    <property type="entry name" value="RlmM_FDX"/>
</dbReference>
<dbReference type="InterPro" id="IPR048646">
    <property type="entry name" value="RlmM_THUMP-like"/>
</dbReference>
<dbReference type="InterPro" id="IPR002877">
    <property type="entry name" value="RNA_MeTrfase_FtsJ_dom"/>
</dbReference>
<dbReference type="InterPro" id="IPR011224">
    <property type="entry name" value="rRNA_MeTrfase_M"/>
</dbReference>
<dbReference type="InterPro" id="IPR029063">
    <property type="entry name" value="SAM-dependent_MTases_sf"/>
</dbReference>
<dbReference type="NCBIfam" id="NF008734">
    <property type="entry name" value="PRK11760.1"/>
    <property type="match status" value="1"/>
</dbReference>
<dbReference type="PANTHER" id="PTHR37524">
    <property type="entry name" value="RIBOSOMAL RNA LARGE SUBUNIT METHYLTRANSFERASE M"/>
    <property type="match status" value="1"/>
</dbReference>
<dbReference type="PANTHER" id="PTHR37524:SF2">
    <property type="entry name" value="RIBOSOMAL RNA METHYLTRANSFERASE FTSJ DOMAIN-CONTAINING PROTEIN"/>
    <property type="match status" value="1"/>
</dbReference>
<dbReference type="Pfam" id="PF01728">
    <property type="entry name" value="FtsJ"/>
    <property type="match status" value="1"/>
</dbReference>
<dbReference type="Pfam" id="PF18125">
    <property type="entry name" value="RlmM_FDX"/>
    <property type="match status" value="1"/>
</dbReference>
<dbReference type="Pfam" id="PF21239">
    <property type="entry name" value="RLMM_N"/>
    <property type="match status" value="1"/>
</dbReference>
<dbReference type="PIRSF" id="PIRSF028774">
    <property type="entry name" value="UCP028774"/>
    <property type="match status" value="1"/>
</dbReference>
<dbReference type="SUPFAM" id="SSF53335">
    <property type="entry name" value="S-adenosyl-L-methionine-dependent methyltransferases"/>
    <property type="match status" value="1"/>
</dbReference>